<dbReference type="EMBL" id="CR382131">
    <property type="protein sequence ID" value="CAG79820.1"/>
    <property type="molecule type" value="Genomic_DNA"/>
</dbReference>
<dbReference type="RefSeq" id="XP_504225.1">
    <property type="nucleotide sequence ID" value="XM_504225.1"/>
</dbReference>
<dbReference type="SMR" id="Q6C537"/>
<dbReference type="FunCoup" id="Q6C537">
    <property type="interactions" value="1294"/>
</dbReference>
<dbReference type="STRING" id="284591.Q6C537"/>
<dbReference type="EnsemblFungi" id="CAG79820">
    <property type="protein sequence ID" value="CAG79820"/>
    <property type="gene ID" value="YALI0_E21329g"/>
</dbReference>
<dbReference type="KEGG" id="yli:2911891"/>
<dbReference type="VEuPathDB" id="FungiDB:YALI0_E21329g"/>
<dbReference type="HOGENOM" id="CLU_074848_0_1_1"/>
<dbReference type="InParanoid" id="Q6C537"/>
<dbReference type="OMA" id="HYIGIIR"/>
<dbReference type="OrthoDB" id="75512at4891"/>
<dbReference type="Proteomes" id="UP000001300">
    <property type="component" value="Chromosome E"/>
</dbReference>
<dbReference type="GO" id="GO:0000421">
    <property type="term" value="C:autophagosome membrane"/>
    <property type="evidence" value="ECO:0007669"/>
    <property type="project" value="EnsemblFungi"/>
</dbReference>
<dbReference type="GO" id="GO:0005768">
    <property type="term" value="C:endosome"/>
    <property type="evidence" value="ECO:0007669"/>
    <property type="project" value="EnsemblFungi"/>
</dbReference>
<dbReference type="GO" id="GO:0000324">
    <property type="term" value="C:fungal-type vacuole"/>
    <property type="evidence" value="ECO:0007669"/>
    <property type="project" value="EnsemblFungi"/>
</dbReference>
<dbReference type="GO" id="GO:0005794">
    <property type="term" value="C:Golgi apparatus"/>
    <property type="evidence" value="ECO:0000318"/>
    <property type="project" value="GO_Central"/>
</dbReference>
<dbReference type="GO" id="GO:0005886">
    <property type="term" value="C:plasma membrane"/>
    <property type="evidence" value="ECO:0007669"/>
    <property type="project" value="UniProtKB-SubCell"/>
</dbReference>
<dbReference type="GO" id="GO:0031201">
    <property type="term" value="C:SNARE complex"/>
    <property type="evidence" value="ECO:0007669"/>
    <property type="project" value="EnsemblFungi"/>
</dbReference>
<dbReference type="GO" id="GO:0016409">
    <property type="term" value="F:palmitoyltransferase activity"/>
    <property type="evidence" value="ECO:0007669"/>
    <property type="project" value="EnsemblFungi"/>
</dbReference>
<dbReference type="GO" id="GO:0005484">
    <property type="term" value="F:SNAP receptor activity"/>
    <property type="evidence" value="ECO:0000318"/>
    <property type="project" value="GO_Central"/>
</dbReference>
<dbReference type="GO" id="GO:0061909">
    <property type="term" value="P:autophagosome-lysosome fusion"/>
    <property type="evidence" value="ECO:0007669"/>
    <property type="project" value="EnsemblFungi"/>
</dbReference>
<dbReference type="GO" id="GO:0006888">
    <property type="term" value="P:endoplasmic reticulum to Golgi vesicle-mediated transport"/>
    <property type="evidence" value="ECO:0000318"/>
    <property type="project" value="GO_Central"/>
</dbReference>
<dbReference type="GO" id="GO:0006891">
    <property type="term" value="P:intra-Golgi vesicle-mediated transport"/>
    <property type="evidence" value="ECO:0007669"/>
    <property type="project" value="EnsemblFungi"/>
</dbReference>
<dbReference type="GO" id="GO:0006886">
    <property type="term" value="P:intracellular protein transport"/>
    <property type="evidence" value="ECO:0007669"/>
    <property type="project" value="EnsemblFungi"/>
</dbReference>
<dbReference type="GO" id="GO:0042144">
    <property type="term" value="P:vacuole fusion, non-autophagic"/>
    <property type="evidence" value="ECO:0007669"/>
    <property type="project" value="EnsemblFungi"/>
</dbReference>
<dbReference type="CDD" id="cd14824">
    <property type="entry name" value="Longin"/>
    <property type="match status" value="1"/>
</dbReference>
<dbReference type="CDD" id="cd15867">
    <property type="entry name" value="R-SNARE_YKT6"/>
    <property type="match status" value="1"/>
</dbReference>
<dbReference type="FunFam" id="1.20.5.110:FF:000020">
    <property type="entry name" value="synaptobrevin homolog YKT6"/>
    <property type="match status" value="1"/>
</dbReference>
<dbReference type="Gene3D" id="1.20.5.110">
    <property type="match status" value="1"/>
</dbReference>
<dbReference type="Gene3D" id="3.30.450.50">
    <property type="entry name" value="Longin domain"/>
    <property type="match status" value="1"/>
</dbReference>
<dbReference type="InterPro" id="IPR011012">
    <property type="entry name" value="Longin-like_dom_sf"/>
</dbReference>
<dbReference type="InterPro" id="IPR010908">
    <property type="entry name" value="Longin_dom"/>
</dbReference>
<dbReference type="InterPro" id="IPR045848">
    <property type="entry name" value="R-SNARE_YKT6"/>
</dbReference>
<dbReference type="InterPro" id="IPR001388">
    <property type="entry name" value="Synaptobrevin-like"/>
</dbReference>
<dbReference type="InterPro" id="IPR042855">
    <property type="entry name" value="V_SNARE_CC"/>
</dbReference>
<dbReference type="PANTHER" id="PTHR45806">
    <property type="entry name" value="SYNAPTOBREVIN HOMOLOG YKT6"/>
    <property type="match status" value="1"/>
</dbReference>
<dbReference type="PANTHER" id="PTHR45806:SF1">
    <property type="entry name" value="SYNAPTOBREVIN HOMOLOG YKT6"/>
    <property type="match status" value="1"/>
</dbReference>
<dbReference type="Pfam" id="PF13774">
    <property type="entry name" value="Longin"/>
    <property type="match status" value="1"/>
</dbReference>
<dbReference type="Pfam" id="PF00957">
    <property type="entry name" value="Synaptobrevin"/>
    <property type="match status" value="1"/>
</dbReference>
<dbReference type="PRINTS" id="PR00219">
    <property type="entry name" value="SYNAPTOBREVN"/>
</dbReference>
<dbReference type="SMART" id="SM01270">
    <property type="entry name" value="Longin"/>
    <property type="match status" value="1"/>
</dbReference>
<dbReference type="SUPFAM" id="SSF58038">
    <property type="entry name" value="SNARE fusion complex"/>
    <property type="match status" value="1"/>
</dbReference>
<dbReference type="SUPFAM" id="SSF64356">
    <property type="entry name" value="SNARE-like"/>
    <property type="match status" value="1"/>
</dbReference>
<dbReference type="PROSITE" id="PS50859">
    <property type="entry name" value="LONGIN"/>
    <property type="match status" value="1"/>
</dbReference>
<dbReference type="PROSITE" id="PS00417">
    <property type="entry name" value="SYNAPTOBREVIN"/>
    <property type="match status" value="1"/>
</dbReference>
<dbReference type="PROSITE" id="PS50892">
    <property type="entry name" value="V_SNARE"/>
    <property type="match status" value="1"/>
</dbReference>
<feature type="chain" id="PRO_0000206779" description="Synaptobrevin homolog YKT6">
    <location>
        <begin position="1"/>
        <end position="197"/>
    </location>
</feature>
<feature type="propeptide" id="PRO_0000396674" description="Removed in mature form" evidence="1">
    <location>
        <begin position="198"/>
        <end position="200"/>
    </location>
</feature>
<feature type="domain" description="Longin" evidence="2">
    <location>
        <begin position="7"/>
        <end position="129"/>
    </location>
</feature>
<feature type="domain" description="v-SNARE coiled-coil homology" evidence="3">
    <location>
        <begin position="140"/>
        <end position="200"/>
    </location>
</feature>
<feature type="modified residue" description="Cysteine methyl ester" evidence="1">
    <location>
        <position position="197"/>
    </location>
</feature>
<feature type="lipid moiety-binding region" description="S-palmitoyl cysteine" evidence="1">
    <location>
        <position position="196"/>
    </location>
</feature>
<feature type="lipid moiety-binding region" description="S-farnesyl cysteine" evidence="1">
    <location>
        <position position="197"/>
    </location>
</feature>
<name>YKT6_YARLI</name>
<keyword id="KW-1003">Cell membrane</keyword>
<keyword id="KW-0175">Coiled coil</keyword>
<keyword id="KW-0449">Lipoprotein</keyword>
<keyword id="KW-0472">Membrane</keyword>
<keyword id="KW-0488">Methylation</keyword>
<keyword id="KW-0564">Palmitate</keyword>
<keyword id="KW-0636">Prenylation</keyword>
<keyword id="KW-1185">Reference proteome</keyword>
<proteinExistence type="inferred from homology"/>
<comment type="subcellular location">
    <subcellularLocation>
        <location evidence="4">Cell membrane</location>
        <topology evidence="4">Lipid-anchor</topology>
        <orientation evidence="4">Cytoplasmic side</orientation>
    </subcellularLocation>
</comment>
<comment type="similarity">
    <text evidence="4">Belongs to the synaptobrevin family.</text>
</comment>
<sequence length="200" mass="22765">MKLYYIGILRPNKPEAVQLASASDLSSYSWFERSTVGQAFTFLAETVIPRTEPGQRQSVEENDYVGHAYLRSDGLGGVIITDQEYPVRVAYTLLNKVLEEYLTKHPKAEWENAKEASSKLAMPELEDYVKRYQDPHQADAIMRVQQELDETKIVLHKTIESVLARGERLDTLVDKSEALSQSSKIFFKQAKKTNSCCILM</sequence>
<gene>
    <name type="primary">YKT6</name>
    <name type="ordered locus">YALI0E21329g</name>
</gene>
<protein>
    <recommendedName>
        <fullName>Synaptobrevin homolog YKT6</fullName>
    </recommendedName>
</protein>
<organism>
    <name type="scientific">Yarrowia lipolytica (strain CLIB 122 / E 150)</name>
    <name type="common">Yeast</name>
    <name type="synonym">Candida lipolytica</name>
    <dbReference type="NCBI Taxonomy" id="284591"/>
    <lineage>
        <taxon>Eukaryota</taxon>
        <taxon>Fungi</taxon>
        <taxon>Dikarya</taxon>
        <taxon>Ascomycota</taxon>
        <taxon>Saccharomycotina</taxon>
        <taxon>Dipodascomycetes</taxon>
        <taxon>Dipodascales</taxon>
        <taxon>Dipodascales incertae sedis</taxon>
        <taxon>Yarrowia</taxon>
    </lineage>
</organism>
<reference key="1">
    <citation type="journal article" date="2004" name="Nature">
        <title>Genome evolution in yeasts.</title>
        <authorList>
            <person name="Dujon B."/>
            <person name="Sherman D."/>
            <person name="Fischer G."/>
            <person name="Durrens P."/>
            <person name="Casaregola S."/>
            <person name="Lafontaine I."/>
            <person name="de Montigny J."/>
            <person name="Marck C."/>
            <person name="Neuveglise C."/>
            <person name="Talla E."/>
            <person name="Goffard N."/>
            <person name="Frangeul L."/>
            <person name="Aigle M."/>
            <person name="Anthouard V."/>
            <person name="Babour A."/>
            <person name="Barbe V."/>
            <person name="Barnay S."/>
            <person name="Blanchin S."/>
            <person name="Beckerich J.-M."/>
            <person name="Beyne E."/>
            <person name="Bleykasten C."/>
            <person name="Boisrame A."/>
            <person name="Boyer J."/>
            <person name="Cattolico L."/>
            <person name="Confanioleri F."/>
            <person name="de Daruvar A."/>
            <person name="Despons L."/>
            <person name="Fabre E."/>
            <person name="Fairhead C."/>
            <person name="Ferry-Dumazet H."/>
            <person name="Groppi A."/>
            <person name="Hantraye F."/>
            <person name="Hennequin C."/>
            <person name="Jauniaux N."/>
            <person name="Joyet P."/>
            <person name="Kachouri R."/>
            <person name="Kerrest A."/>
            <person name="Koszul R."/>
            <person name="Lemaire M."/>
            <person name="Lesur I."/>
            <person name="Ma L."/>
            <person name="Muller H."/>
            <person name="Nicaud J.-M."/>
            <person name="Nikolski M."/>
            <person name="Oztas S."/>
            <person name="Ozier-Kalogeropoulos O."/>
            <person name="Pellenz S."/>
            <person name="Potier S."/>
            <person name="Richard G.-F."/>
            <person name="Straub M.-L."/>
            <person name="Suleau A."/>
            <person name="Swennen D."/>
            <person name="Tekaia F."/>
            <person name="Wesolowski-Louvel M."/>
            <person name="Westhof E."/>
            <person name="Wirth B."/>
            <person name="Zeniou-Meyer M."/>
            <person name="Zivanovic Y."/>
            <person name="Bolotin-Fukuhara M."/>
            <person name="Thierry A."/>
            <person name="Bouchier C."/>
            <person name="Caudron B."/>
            <person name="Scarpelli C."/>
            <person name="Gaillardin C."/>
            <person name="Weissenbach J."/>
            <person name="Wincker P."/>
            <person name="Souciet J.-L."/>
        </authorList>
    </citation>
    <scope>NUCLEOTIDE SEQUENCE [LARGE SCALE GENOMIC DNA]</scope>
    <source>
        <strain>CLIB 122 / E 150</strain>
    </source>
</reference>
<accession>Q6C537</accession>
<evidence type="ECO:0000250" key="1"/>
<evidence type="ECO:0000255" key="2">
    <source>
        <dbReference type="PROSITE-ProRule" id="PRU00231"/>
    </source>
</evidence>
<evidence type="ECO:0000255" key="3">
    <source>
        <dbReference type="PROSITE-ProRule" id="PRU00290"/>
    </source>
</evidence>
<evidence type="ECO:0000305" key="4"/>